<comment type="function">
    <text evidence="1">Binds the 23S rRNA.</text>
</comment>
<comment type="subunit">
    <text evidence="1">Part of the 50S ribosomal subunit.</text>
</comment>
<comment type="similarity">
    <text evidence="1">Belongs to the bacterial ribosomal protein bL31 family. Type A subfamily.</text>
</comment>
<keyword id="KW-1185">Reference proteome</keyword>
<keyword id="KW-0687">Ribonucleoprotein</keyword>
<keyword id="KW-0689">Ribosomal protein</keyword>
<keyword id="KW-0694">RNA-binding</keyword>
<keyword id="KW-0699">rRNA-binding</keyword>
<sequence length="95" mass="10737">MRDIHPVSKPCVYNCVTCKKEFIIDSAAKNTEVAIEVCSNCHTFFIGKQNATTTLRGRAEKLNNRFEAGLNNINKKPEKKKIQGKSEPRKSLNEL</sequence>
<gene>
    <name evidence="1" type="primary">rpmE</name>
    <name evidence="1" type="synonym">rpl31</name>
    <name type="ordered locus">UU002</name>
</gene>
<reference key="1">
    <citation type="journal article" date="2000" name="Nature">
        <title>The complete sequence of the mucosal pathogen Ureaplasma urealyticum.</title>
        <authorList>
            <person name="Glass J.I."/>
            <person name="Lefkowitz E.J."/>
            <person name="Glass J.S."/>
            <person name="Heiner C.R."/>
            <person name="Chen E.Y."/>
            <person name="Cassell G.H."/>
        </authorList>
    </citation>
    <scope>NUCLEOTIDE SEQUENCE [LARGE SCALE GENOMIC DNA]</scope>
    <source>
        <strain>ATCC 700970</strain>
    </source>
</reference>
<name>RL31_UREPA</name>
<proteinExistence type="inferred from homology"/>
<evidence type="ECO:0000255" key="1">
    <source>
        <dbReference type="HAMAP-Rule" id="MF_00501"/>
    </source>
</evidence>
<evidence type="ECO:0000256" key="2">
    <source>
        <dbReference type="SAM" id="MobiDB-lite"/>
    </source>
</evidence>
<evidence type="ECO:0000305" key="3"/>
<organism>
    <name type="scientific">Ureaplasma parvum serovar 3 (strain ATCC 700970)</name>
    <dbReference type="NCBI Taxonomy" id="273119"/>
    <lineage>
        <taxon>Bacteria</taxon>
        <taxon>Bacillati</taxon>
        <taxon>Mycoplasmatota</taxon>
        <taxon>Mycoplasmoidales</taxon>
        <taxon>Mycoplasmoidaceae</taxon>
        <taxon>Ureaplasma</taxon>
    </lineage>
</organism>
<protein>
    <recommendedName>
        <fullName evidence="1">Large ribosomal subunit protein bL31</fullName>
    </recommendedName>
    <alternativeName>
        <fullName evidence="3">50S ribosomal protein L31</fullName>
    </alternativeName>
</protein>
<accession>Q9PRE1</accession>
<dbReference type="EMBL" id="AF222894">
    <property type="protein sequence ID" value="AAF30409.1"/>
    <property type="molecule type" value="Genomic_DNA"/>
</dbReference>
<dbReference type="RefSeq" id="WP_006688758.1">
    <property type="nucleotide sequence ID" value="NC_002162.1"/>
</dbReference>
<dbReference type="STRING" id="273119.UU002"/>
<dbReference type="EnsemblBacteria" id="AAF30409">
    <property type="protein sequence ID" value="AAF30409"/>
    <property type="gene ID" value="UU002"/>
</dbReference>
<dbReference type="GeneID" id="29672162"/>
<dbReference type="KEGG" id="uur:UU002"/>
<dbReference type="eggNOG" id="COG0254">
    <property type="taxonomic scope" value="Bacteria"/>
</dbReference>
<dbReference type="HOGENOM" id="CLU_114306_4_2_14"/>
<dbReference type="OrthoDB" id="9803251at2"/>
<dbReference type="Proteomes" id="UP000000423">
    <property type="component" value="Chromosome"/>
</dbReference>
<dbReference type="GO" id="GO:1990904">
    <property type="term" value="C:ribonucleoprotein complex"/>
    <property type="evidence" value="ECO:0007669"/>
    <property type="project" value="UniProtKB-KW"/>
</dbReference>
<dbReference type="GO" id="GO:0005840">
    <property type="term" value="C:ribosome"/>
    <property type="evidence" value="ECO:0007669"/>
    <property type="project" value="UniProtKB-KW"/>
</dbReference>
<dbReference type="GO" id="GO:0019843">
    <property type="term" value="F:rRNA binding"/>
    <property type="evidence" value="ECO:0007669"/>
    <property type="project" value="UniProtKB-KW"/>
</dbReference>
<dbReference type="GO" id="GO:0003735">
    <property type="term" value="F:structural constituent of ribosome"/>
    <property type="evidence" value="ECO:0007669"/>
    <property type="project" value="InterPro"/>
</dbReference>
<dbReference type="GO" id="GO:0006412">
    <property type="term" value="P:translation"/>
    <property type="evidence" value="ECO:0007669"/>
    <property type="project" value="UniProtKB-UniRule"/>
</dbReference>
<dbReference type="Gene3D" id="4.10.830.30">
    <property type="entry name" value="Ribosomal protein L31"/>
    <property type="match status" value="1"/>
</dbReference>
<dbReference type="HAMAP" id="MF_00501">
    <property type="entry name" value="Ribosomal_bL31_1"/>
    <property type="match status" value="1"/>
</dbReference>
<dbReference type="InterPro" id="IPR034704">
    <property type="entry name" value="Ribosomal_bL28/bL31-like_sf"/>
</dbReference>
<dbReference type="InterPro" id="IPR002150">
    <property type="entry name" value="Ribosomal_bL31"/>
</dbReference>
<dbReference type="InterPro" id="IPR027491">
    <property type="entry name" value="Ribosomal_bL31_A"/>
</dbReference>
<dbReference type="InterPro" id="IPR042105">
    <property type="entry name" value="Ribosomal_bL31_sf"/>
</dbReference>
<dbReference type="NCBIfam" id="TIGR00105">
    <property type="entry name" value="L31"/>
    <property type="match status" value="1"/>
</dbReference>
<dbReference type="NCBIfam" id="NF000612">
    <property type="entry name" value="PRK00019.1"/>
    <property type="match status" value="1"/>
</dbReference>
<dbReference type="PANTHER" id="PTHR33280">
    <property type="entry name" value="50S RIBOSOMAL PROTEIN L31, CHLOROPLASTIC"/>
    <property type="match status" value="1"/>
</dbReference>
<dbReference type="PANTHER" id="PTHR33280:SF1">
    <property type="entry name" value="LARGE RIBOSOMAL SUBUNIT PROTEIN BL31C"/>
    <property type="match status" value="1"/>
</dbReference>
<dbReference type="Pfam" id="PF01197">
    <property type="entry name" value="Ribosomal_L31"/>
    <property type="match status" value="1"/>
</dbReference>
<dbReference type="SUPFAM" id="SSF143800">
    <property type="entry name" value="L28p-like"/>
    <property type="match status" value="1"/>
</dbReference>
<dbReference type="PROSITE" id="PS01143">
    <property type="entry name" value="RIBOSOMAL_L31"/>
    <property type="match status" value="1"/>
</dbReference>
<feature type="chain" id="PRO_0000173175" description="Large ribosomal subunit protein bL31">
    <location>
        <begin position="1"/>
        <end position="95"/>
    </location>
</feature>
<feature type="region of interest" description="Disordered" evidence="2">
    <location>
        <begin position="68"/>
        <end position="95"/>
    </location>
</feature>
<feature type="compositionally biased region" description="Basic and acidic residues" evidence="2">
    <location>
        <begin position="80"/>
        <end position="95"/>
    </location>
</feature>